<proteinExistence type="predicted"/>
<feature type="chain" id="PRO_0000072144" description="Sporulation-specific protein 77">
    <location>
        <begin position="1"/>
        <end position="477"/>
    </location>
</feature>
<feature type="region of interest" description="Disordered" evidence="1">
    <location>
        <begin position="428"/>
        <end position="452"/>
    </location>
</feature>
<feature type="compositionally biased region" description="Low complexity" evidence="1">
    <location>
        <begin position="432"/>
        <end position="444"/>
    </location>
</feature>
<accession>Q06134</accession>
<accession>D6VYX9</accession>
<organism>
    <name type="scientific">Saccharomyces cerevisiae (strain ATCC 204508 / S288c)</name>
    <name type="common">Baker's yeast</name>
    <dbReference type="NCBI Taxonomy" id="559292"/>
    <lineage>
        <taxon>Eukaryota</taxon>
        <taxon>Fungi</taxon>
        <taxon>Dikarya</taxon>
        <taxon>Ascomycota</taxon>
        <taxon>Saccharomycotina</taxon>
        <taxon>Saccharomycetes</taxon>
        <taxon>Saccharomycetales</taxon>
        <taxon>Saccharomycetaceae</taxon>
        <taxon>Saccharomyces</taxon>
    </lineage>
</organism>
<name>SPO77_YEAST</name>
<dbReference type="EMBL" id="U19028">
    <property type="protein sequence ID" value="AAB67257.1"/>
    <property type="molecule type" value="Genomic_DNA"/>
</dbReference>
<dbReference type="EMBL" id="BK006945">
    <property type="protein sequence ID" value="DAA09645.1"/>
    <property type="molecule type" value="Genomic_DNA"/>
</dbReference>
<dbReference type="PIR" id="S51344">
    <property type="entry name" value="S51344"/>
</dbReference>
<dbReference type="RefSeq" id="NP_013445.1">
    <property type="nucleotide sequence ID" value="NM_001182230.1"/>
</dbReference>
<dbReference type="BioGRID" id="31603">
    <property type="interactions" value="34"/>
</dbReference>
<dbReference type="FunCoup" id="Q06134">
    <property type="interactions" value="93"/>
</dbReference>
<dbReference type="IntAct" id="Q06134">
    <property type="interactions" value="1"/>
</dbReference>
<dbReference type="MINT" id="Q06134"/>
<dbReference type="STRING" id="4932.YLR341W"/>
<dbReference type="PaxDb" id="4932-YLR341W"/>
<dbReference type="TopDownProteomics" id="Q06134"/>
<dbReference type="EnsemblFungi" id="YLR341W_mRNA">
    <property type="protein sequence ID" value="YLR341W"/>
    <property type="gene ID" value="YLR341W"/>
</dbReference>
<dbReference type="GeneID" id="851054"/>
<dbReference type="KEGG" id="sce:YLR341W"/>
<dbReference type="AGR" id="SGD:S000004333"/>
<dbReference type="SGD" id="S000004333">
    <property type="gene designation" value="SPO77"/>
</dbReference>
<dbReference type="VEuPathDB" id="FungiDB:YLR341W"/>
<dbReference type="HOGENOM" id="CLU_045300_0_0_1"/>
<dbReference type="InParanoid" id="Q06134"/>
<dbReference type="OMA" id="CHNRNTI"/>
<dbReference type="OrthoDB" id="4042055at2759"/>
<dbReference type="BioCyc" id="YEAST:G3O-32418-MONOMER"/>
<dbReference type="BioGRID-ORCS" id="851054">
    <property type="hits" value="1 hit in 10 CRISPR screens"/>
</dbReference>
<dbReference type="PRO" id="PR:Q06134"/>
<dbReference type="Proteomes" id="UP000002311">
    <property type="component" value="Chromosome XII"/>
</dbReference>
<dbReference type="RNAct" id="Q06134">
    <property type="molecule type" value="protein"/>
</dbReference>
<dbReference type="GO" id="GO:0005737">
    <property type="term" value="C:cytoplasm"/>
    <property type="evidence" value="ECO:0000314"/>
    <property type="project" value="SGD"/>
</dbReference>
<dbReference type="GO" id="GO:0030437">
    <property type="term" value="P:ascospore formation"/>
    <property type="evidence" value="ECO:0000315"/>
    <property type="project" value="SGD"/>
</dbReference>
<dbReference type="GO" id="GO:0030476">
    <property type="term" value="P:ascospore wall assembly"/>
    <property type="evidence" value="ECO:0000315"/>
    <property type="project" value="SGD"/>
</dbReference>
<dbReference type="GO" id="GO:1903024">
    <property type="term" value="P:positive regulation of ascospore-type prospore membrane formation"/>
    <property type="evidence" value="ECO:0000315"/>
    <property type="project" value="SGD"/>
</dbReference>
<evidence type="ECO:0000256" key="1">
    <source>
        <dbReference type="SAM" id="MobiDB-lite"/>
    </source>
</evidence>
<evidence type="ECO:0000269" key="2">
    <source>
    </source>
</evidence>
<evidence type="ECO:0000269" key="3">
    <source>
    </source>
</evidence>
<reference key="1">
    <citation type="journal article" date="1997" name="Nature">
        <title>The nucleotide sequence of Saccharomyces cerevisiae chromosome XII.</title>
        <authorList>
            <person name="Johnston M."/>
            <person name="Hillier L.W."/>
            <person name="Riles L."/>
            <person name="Albermann K."/>
            <person name="Andre B."/>
            <person name="Ansorge W."/>
            <person name="Benes V."/>
            <person name="Brueckner M."/>
            <person name="Delius H."/>
            <person name="Dubois E."/>
            <person name="Duesterhoeft A."/>
            <person name="Entian K.-D."/>
            <person name="Floeth M."/>
            <person name="Goffeau A."/>
            <person name="Hebling U."/>
            <person name="Heumann K."/>
            <person name="Heuss-Neitzel D."/>
            <person name="Hilbert H."/>
            <person name="Hilger F."/>
            <person name="Kleine K."/>
            <person name="Koetter P."/>
            <person name="Louis E.J."/>
            <person name="Messenguy F."/>
            <person name="Mewes H.-W."/>
            <person name="Miosga T."/>
            <person name="Moestl D."/>
            <person name="Mueller-Auer S."/>
            <person name="Nentwich U."/>
            <person name="Obermaier B."/>
            <person name="Piravandi E."/>
            <person name="Pohl T.M."/>
            <person name="Portetelle D."/>
            <person name="Purnelle B."/>
            <person name="Rechmann S."/>
            <person name="Rieger M."/>
            <person name="Rinke M."/>
            <person name="Rose M."/>
            <person name="Scharfe M."/>
            <person name="Scherens B."/>
            <person name="Scholler P."/>
            <person name="Schwager C."/>
            <person name="Schwarz S."/>
            <person name="Underwood A.P."/>
            <person name="Urrestarazu L.A."/>
            <person name="Vandenbol M."/>
            <person name="Verhasselt P."/>
            <person name="Vierendeels F."/>
            <person name="Voet M."/>
            <person name="Volckaert G."/>
            <person name="Voss H."/>
            <person name="Wambutt R."/>
            <person name="Wedler E."/>
            <person name="Wedler H."/>
            <person name="Zimmermann F.K."/>
            <person name="Zollner A."/>
            <person name="Hani J."/>
            <person name="Hoheisel J.D."/>
        </authorList>
    </citation>
    <scope>NUCLEOTIDE SEQUENCE [LARGE SCALE GENOMIC DNA]</scope>
    <source>
        <strain>ATCC 204508 / S288c</strain>
    </source>
</reference>
<reference key="2">
    <citation type="journal article" date="2014" name="G3 (Bethesda)">
        <title>The reference genome sequence of Saccharomyces cerevisiae: Then and now.</title>
        <authorList>
            <person name="Engel S.R."/>
            <person name="Dietrich F.S."/>
            <person name="Fisk D.G."/>
            <person name="Binkley G."/>
            <person name="Balakrishnan R."/>
            <person name="Costanzo M.C."/>
            <person name="Dwight S.S."/>
            <person name="Hitz B.C."/>
            <person name="Karra K."/>
            <person name="Nash R.S."/>
            <person name="Weng S."/>
            <person name="Wong E.D."/>
            <person name="Lloyd P."/>
            <person name="Skrzypek M.S."/>
            <person name="Miyasato S.R."/>
            <person name="Simison M."/>
            <person name="Cherry J.M."/>
        </authorList>
    </citation>
    <scope>GENOME REANNOTATION</scope>
    <source>
        <strain>ATCC 204508 / S288c</strain>
    </source>
</reference>
<reference key="3">
    <citation type="journal article" date="2001" name="Curr. Biol.">
        <title>A screen for genes required for meiosis and spore formation based on whole-genome expression.</title>
        <authorList>
            <person name="Rabitsch K.P."/>
            <person name="Toth A."/>
            <person name="Galova M."/>
            <person name="Schleiffer A."/>
            <person name="Schaffner G."/>
            <person name="Aigner E."/>
            <person name="Rupp C."/>
            <person name="Penkner A.M."/>
            <person name="Moreno-Borchart A.C."/>
            <person name="Primig M."/>
            <person name="Esposito R.E."/>
            <person name="Klein F."/>
            <person name="Knop M."/>
            <person name="Nasmyth K."/>
        </authorList>
    </citation>
    <scope>FUNCTION</scope>
</reference>
<reference key="4">
    <citation type="journal article" date="2004" name="Eukaryot. Cell">
        <title>Morphogenetic pathway of spore wall assembly in Saccharomyces cerevisiae.</title>
        <authorList>
            <person name="Coluccio A."/>
            <person name="Bogengruber E."/>
            <person name="Conrad M.N."/>
            <person name="Dresser M.E."/>
            <person name="Briza P."/>
            <person name="Neiman A.M."/>
        </authorList>
    </citation>
    <scope>FUNCTION</scope>
    <scope>SUBCELLULAR LOCATION</scope>
</reference>
<sequence>MFRRGDNSNFNVQNSFFLPLEYEYTVKDNVPSKKKSSIGFFPLDDSLFTSKNNSGHHKSEQLHRGNAETIRSQFGTDAVPIRIDEKEGKWDRIQDDNSSNLNYQINNSNDPASSGKYTQSIDCNHIAESKFSKKNGNIDSLRSNSATFMLNTADEDVIEFSFDDNVPYAELLSGATLEKCSLTLNEINKKLFNTLYDFRVSKDNPEENLVELILPNCVVLLNFFEDIELLADSSDEAFEKSTFINTIEFIVHDIWVETLIKNINLLQMFDADLKCYNDKYIICKLKGQYPSTNIVDIMCRLKHFSNSILETFKFGIELKEQDQCHNRNTIINYVLFSRVFSTIVLEIQKCFILIVKFMYSVNFLEKFSDEVFLSFIEILIKIVFEHQIPQLFLGIDEIIQLWLKNNEGKRQQLLSAWCNGTVQDMKQSQQRESSNAESESITSSTEEDEEGLQFNKWDVIEPFIDNIKALNQSKSHM</sequence>
<comment type="function">
    <text evidence="2 3">Required for spore wall assembly and ascus formation.</text>
</comment>
<comment type="subcellular location">
    <subcellularLocation>
        <location evidence="3">Cytoplasm</location>
    </subcellularLocation>
    <text>Diffuse location throughout the cell at all stages of sporulation.</text>
</comment>
<protein>
    <recommendedName>
        <fullName>Sporulation-specific protein 77</fullName>
    </recommendedName>
</protein>
<gene>
    <name type="primary">SPO77</name>
    <name type="ordered locus">YLR341W</name>
</gene>
<keyword id="KW-0963">Cytoplasm</keyword>
<keyword id="KW-1185">Reference proteome</keyword>
<keyword id="KW-0749">Sporulation</keyword>